<evidence type="ECO:0000250" key="1">
    <source>
        <dbReference type="UniProtKB" id="Q04571"/>
    </source>
</evidence>
<evidence type="ECO:0000255" key="2"/>
<evidence type="ECO:0000255" key="3">
    <source>
        <dbReference type="PROSITE-ProRule" id="PRU00498"/>
    </source>
</evidence>
<evidence type="ECO:0000269" key="4">
    <source>
    </source>
</evidence>
<evidence type="ECO:0000303" key="5">
    <source>
    </source>
</evidence>
<evidence type="ECO:0000305" key="6"/>
<evidence type="ECO:0000305" key="7">
    <source>
    </source>
</evidence>
<organism>
    <name type="scientific">Beauveria bassiana (strain ARSEF 2860)</name>
    <name type="common">White muscardine disease fungus</name>
    <name type="synonym">Tritirachium shiotae</name>
    <dbReference type="NCBI Taxonomy" id="655819"/>
    <lineage>
        <taxon>Eukaryota</taxon>
        <taxon>Fungi</taxon>
        <taxon>Dikarya</taxon>
        <taxon>Ascomycota</taxon>
        <taxon>Pezizomycotina</taxon>
        <taxon>Sordariomycetes</taxon>
        <taxon>Hypocreomycetidae</taxon>
        <taxon>Hypocreales</taxon>
        <taxon>Cordycipitaceae</taxon>
        <taxon>Beauveria</taxon>
    </lineage>
</organism>
<proteinExistence type="evidence at transcript level"/>
<name>HYD1C_BEAB2</name>
<sequence length="89" mass="8687">MKFSLATIALAAAVAASPTNPPAGAGNCNVKGKTGNVTCCNSAIPILGQLACNVLASGTCNSGQTAYCCDTGGNTGLINVIALNCVKLL</sequence>
<comment type="function">
    <text evidence="4 7">Aerial growth, conidiation, and dispersal of filamentous fungi in the environment rely upon a capability of their secreting small amphipathic proteins called hydrophobins (HPBs) with low sequence identity. Class I can self-assemble into an outermost layer of rodlet bundles on aerial cell surfaces, conferring cellular hydrophobicity that supports fungal growth, development and dispersal; whereas Class II form highly ordered films at water-air interfaces through intermolecular interactions but contribute nothing to the rodlet structure (Probable). Hyd1C contributes to certain cell wall-related features, such as hydrophobicity but is not involved in cell wall-related events during fungal proliferation in host hemocoel (PubMed:39724799). Does not contribute to conidial hydrophobicity (PubMed:39724799).</text>
</comment>
<comment type="subcellular location">
    <subcellularLocation>
        <location evidence="4">Secreted</location>
    </subcellularLocation>
    <subcellularLocation>
        <location evidence="4">Secreted</location>
        <location evidence="4">Cell wall</location>
    </subcellularLocation>
    <subcellularLocation>
        <location evidence="4">Vacuole</location>
    </subcellularLocation>
    <subcellularLocation>
        <location evidence="4">Cytoplasmic vesicle</location>
    </subcellularLocation>
    <text evidence="4">Accumulates exclusively on the cell walls of aerial hyphae and conidia and in the vacuoles and vesicles of hyphae and blastospores.</text>
</comment>
<comment type="induction">
    <text evidence="4">Under normal conditions on SDAY medium (Sabouraud dextrose agar plus 1% yeast extract), hyd1C is consistently down-regulated. Hyd1A is the most active at transcription level under normal culture conditions, followed by hyd1B, hyd1E, hyd2A and hyd2C in order.</text>
</comment>
<comment type="disruption phenotype">
    <text evidence="4">Does not affect radial growth and multiple stress responses.</text>
</comment>
<comment type="similarity">
    <text evidence="6">Belongs to the fungal hydrophobin family.</text>
</comment>
<accession>J5JJC1</accession>
<feature type="signal peptide" evidence="2">
    <location>
        <begin position="1"/>
        <end position="16"/>
    </location>
</feature>
<feature type="chain" id="PRO_5003783649" description="Class I hydrophobin C">
    <location>
        <begin position="17"/>
        <end position="89"/>
    </location>
</feature>
<feature type="glycosylation site" description="N-linked (GlcNAc...) asparagine" evidence="3">
    <location>
        <position position="36"/>
    </location>
</feature>
<feature type="disulfide bond" evidence="1">
    <location>
        <begin position="28"/>
        <end position="68"/>
    </location>
</feature>
<feature type="disulfide bond" evidence="1">
    <location>
        <begin position="39"/>
        <end position="60"/>
    </location>
</feature>
<feature type="disulfide bond" evidence="1">
    <location>
        <begin position="40"/>
        <end position="52"/>
    </location>
</feature>
<feature type="disulfide bond" evidence="1">
    <location>
        <begin position="69"/>
        <end position="85"/>
    </location>
</feature>
<protein>
    <recommendedName>
        <fullName evidence="5">Class I hydrophobin C</fullName>
    </recommendedName>
</protein>
<gene>
    <name evidence="5" type="primary">hyd1C</name>
    <name type="ORF">BBA_07597</name>
</gene>
<keyword id="KW-0134">Cell wall</keyword>
<keyword id="KW-0968">Cytoplasmic vesicle</keyword>
<keyword id="KW-1015">Disulfide bond</keyword>
<keyword id="KW-0325">Glycoprotein</keyword>
<keyword id="KW-1185">Reference proteome</keyword>
<keyword id="KW-0964">Secreted</keyword>
<keyword id="KW-0732">Signal</keyword>
<keyword id="KW-0926">Vacuole</keyword>
<dbReference type="EMBL" id="JH725175">
    <property type="protein sequence ID" value="EJP63421.1"/>
    <property type="molecule type" value="Genomic_DNA"/>
</dbReference>
<dbReference type="RefSeq" id="XP_008600916.1">
    <property type="nucleotide sequence ID" value="XM_008602694.1"/>
</dbReference>
<dbReference type="GeneID" id="19890609"/>
<dbReference type="HOGENOM" id="CLU_168414_1_0_1"/>
<dbReference type="InParanoid" id="J5JJC1"/>
<dbReference type="OrthoDB" id="10937at474943"/>
<dbReference type="Proteomes" id="UP000002762">
    <property type="component" value="Unassembled WGS sequence"/>
</dbReference>
<reference key="1">
    <citation type="journal article" date="2012" name="Sci. Rep.">
        <title>Genomic perspectives on the evolution of fungal entomopathogenicity in Beauveria bassiana.</title>
        <authorList>
            <person name="Xiao G."/>
            <person name="Ying S.-H."/>
            <person name="Zheng P."/>
            <person name="Wang Z.-L."/>
            <person name="Zhang S."/>
            <person name="Xie X.-Q."/>
            <person name="Shang Y."/>
            <person name="St Leger R.J."/>
            <person name="Zhao G.-P."/>
            <person name="Wang C."/>
            <person name="Feng M.-G."/>
        </authorList>
    </citation>
    <scope>NUCLEOTIDE SEQUENCE [LARGE SCALE GENOMIC DNA]</scope>
    <source>
        <strain>ARSEF 2860</strain>
    </source>
</reference>
<reference key="2">
    <citation type="journal article" date="2025" name="Microbiol. Res.">
        <title>Deciphering roles of nine hydrophobins (Hyd1A-F and Hyd2A-C) in the asexual and insect-pathogenic lifecycles of Beauveria bassiana.</title>
        <authorList>
            <person name="Feng J.R."/>
            <person name="Li M."/>
            <person name="Ying S.H."/>
            <person name="Feng M.G."/>
        </authorList>
    </citation>
    <scope>FUNCTION</scope>
    <scope>SUBCELLULAR LOCATION</scope>
    <scope>DISRUPTION PHENOTYPE</scope>
</reference>